<reference key="1">
    <citation type="submission" date="2007-09" db="EMBL/GenBank/DDBJ databases">
        <title>Complete sequence of chromosome of Serratia proteamaculans 568.</title>
        <authorList>
            <consortium name="US DOE Joint Genome Institute"/>
            <person name="Copeland A."/>
            <person name="Lucas S."/>
            <person name="Lapidus A."/>
            <person name="Barry K."/>
            <person name="Glavina del Rio T."/>
            <person name="Dalin E."/>
            <person name="Tice H."/>
            <person name="Pitluck S."/>
            <person name="Chain P."/>
            <person name="Malfatti S."/>
            <person name="Shin M."/>
            <person name="Vergez L."/>
            <person name="Schmutz J."/>
            <person name="Larimer F."/>
            <person name="Land M."/>
            <person name="Hauser L."/>
            <person name="Kyrpides N."/>
            <person name="Kim E."/>
            <person name="Taghavi S."/>
            <person name="Newman L."/>
            <person name="Vangronsveld J."/>
            <person name="van der Lelie D."/>
            <person name="Richardson P."/>
        </authorList>
    </citation>
    <scope>NUCLEOTIDE SEQUENCE [LARGE SCALE GENOMIC DNA]</scope>
    <source>
        <strain>568</strain>
    </source>
</reference>
<gene>
    <name evidence="1" type="primary">anmK</name>
    <name type="ordered locus">Spro_2216</name>
</gene>
<proteinExistence type="inferred from homology"/>
<dbReference type="EC" id="2.7.1.170" evidence="1"/>
<dbReference type="EMBL" id="CP000826">
    <property type="protein sequence ID" value="ABV41317.1"/>
    <property type="molecule type" value="Genomic_DNA"/>
</dbReference>
<dbReference type="SMR" id="A8GDX7"/>
<dbReference type="STRING" id="399741.Spro_2216"/>
<dbReference type="KEGG" id="spe:Spro_2216"/>
<dbReference type="eggNOG" id="COG2377">
    <property type="taxonomic scope" value="Bacteria"/>
</dbReference>
<dbReference type="HOGENOM" id="CLU_038782_0_0_6"/>
<dbReference type="OrthoDB" id="9763949at2"/>
<dbReference type="UniPathway" id="UPA00343"/>
<dbReference type="UniPathway" id="UPA00544"/>
<dbReference type="GO" id="GO:0005524">
    <property type="term" value="F:ATP binding"/>
    <property type="evidence" value="ECO:0007669"/>
    <property type="project" value="UniProtKB-UniRule"/>
</dbReference>
<dbReference type="GO" id="GO:0016301">
    <property type="term" value="F:kinase activity"/>
    <property type="evidence" value="ECO:0007669"/>
    <property type="project" value="UniProtKB-KW"/>
</dbReference>
<dbReference type="GO" id="GO:0016773">
    <property type="term" value="F:phosphotransferase activity, alcohol group as acceptor"/>
    <property type="evidence" value="ECO:0007669"/>
    <property type="project" value="UniProtKB-UniRule"/>
</dbReference>
<dbReference type="GO" id="GO:0097175">
    <property type="term" value="P:1,6-anhydro-N-acetyl-beta-muramic acid catabolic process"/>
    <property type="evidence" value="ECO:0007669"/>
    <property type="project" value="UniProtKB-UniRule"/>
</dbReference>
<dbReference type="GO" id="GO:0006040">
    <property type="term" value="P:amino sugar metabolic process"/>
    <property type="evidence" value="ECO:0007669"/>
    <property type="project" value="InterPro"/>
</dbReference>
<dbReference type="GO" id="GO:0009254">
    <property type="term" value="P:peptidoglycan turnover"/>
    <property type="evidence" value="ECO:0007669"/>
    <property type="project" value="UniProtKB-UniRule"/>
</dbReference>
<dbReference type="CDD" id="cd24050">
    <property type="entry name" value="ASKHA_NBD_ANMK"/>
    <property type="match status" value="1"/>
</dbReference>
<dbReference type="Gene3D" id="3.30.420.40">
    <property type="match status" value="2"/>
</dbReference>
<dbReference type="HAMAP" id="MF_01270">
    <property type="entry name" value="AnhMurNAc_kinase"/>
    <property type="match status" value="1"/>
</dbReference>
<dbReference type="InterPro" id="IPR005338">
    <property type="entry name" value="Anhydro_N_Ac-Mur_kinase"/>
</dbReference>
<dbReference type="InterPro" id="IPR043129">
    <property type="entry name" value="ATPase_NBD"/>
</dbReference>
<dbReference type="NCBIfam" id="NF007138">
    <property type="entry name" value="PRK09585.1-1"/>
    <property type="match status" value="1"/>
</dbReference>
<dbReference type="NCBIfam" id="NF007139">
    <property type="entry name" value="PRK09585.1-3"/>
    <property type="match status" value="1"/>
</dbReference>
<dbReference type="NCBIfam" id="NF007148">
    <property type="entry name" value="PRK09585.3-2"/>
    <property type="match status" value="1"/>
</dbReference>
<dbReference type="PANTHER" id="PTHR30605">
    <property type="entry name" value="ANHYDRO-N-ACETYLMURAMIC ACID KINASE"/>
    <property type="match status" value="1"/>
</dbReference>
<dbReference type="PANTHER" id="PTHR30605:SF0">
    <property type="entry name" value="ANHYDRO-N-ACETYLMURAMIC ACID KINASE"/>
    <property type="match status" value="1"/>
</dbReference>
<dbReference type="Pfam" id="PF03702">
    <property type="entry name" value="AnmK"/>
    <property type="match status" value="1"/>
</dbReference>
<dbReference type="SUPFAM" id="SSF53067">
    <property type="entry name" value="Actin-like ATPase domain"/>
    <property type="match status" value="1"/>
</dbReference>
<comment type="function">
    <text evidence="1">Catalyzes the specific phosphorylation of 1,6-anhydro-N-acetylmuramic acid (anhMurNAc) with the simultaneous cleavage of the 1,6-anhydro ring, generating MurNAc-6-P. Is required for the utilization of anhMurNAc either imported from the medium or derived from its own cell wall murein, and thus plays a role in cell wall recycling.</text>
</comment>
<comment type="catalytic activity">
    <reaction evidence="1">
        <text>1,6-anhydro-N-acetyl-beta-muramate + ATP + H2O = N-acetyl-D-muramate 6-phosphate + ADP + H(+)</text>
        <dbReference type="Rhea" id="RHEA:24952"/>
        <dbReference type="ChEBI" id="CHEBI:15377"/>
        <dbReference type="ChEBI" id="CHEBI:15378"/>
        <dbReference type="ChEBI" id="CHEBI:30616"/>
        <dbReference type="ChEBI" id="CHEBI:58690"/>
        <dbReference type="ChEBI" id="CHEBI:58722"/>
        <dbReference type="ChEBI" id="CHEBI:456216"/>
        <dbReference type="EC" id="2.7.1.170"/>
    </reaction>
</comment>
<comment type="pathway">
    <text evidence="1">Amino-sugar metabolism; 1,6-anhydro-N-acetylmuramate degradation.</text>
</comment>
<comment type="pathway">
    <text evidence="1">Cell wall biogenesis; peptidoglycan recycling.</text>
</comment>
<comment type="similarity">
    <text evidence="1">Belongs to the anhydro-N-acetylmuramic acid kinase family.</text>
</comment>
<keyword id="KW-0067">ATP-binding</keyword>
<keyword id="KW-0119">Carbohydrate metabolism</keyword>
<keyword id="KW-0418">Kinase</keyword>
<keyword id="KW-0547">Nucleotide-binding</keyword>
<keyword id="KW-0808">Transferase</keyword>
<evidence type="ECO:0000255" key="1">
    <source>
        <dbReference type="HAMAP-Rule" id="MF_01270"/>
    </source>
</evidence>
<sequence length="373" mass="39613">MKSGRYIGVMSGTSLDGVDVVLAAIDGRMVAQQASYSHPMPLQLKQDILGMCQGQQTTLSAVGRLDAQLGTLFGEAVLGLLKQTGVAAHDITAIGCHGQTVWHEPEGDARFSMQLGDNNRIAALTNITTVGDFRRRDMAYGGQGAPLVPAFHQALLSHPVERRMVLNIGGIANLSMLLPGAAVRGFDTGPGNMLMDAWIWRHQSQPYDKDGGWAMAGRVCLPLLQQMLADPYFSLPAPKSTGREYFNAAWLERQLAGLAAVSPVDVQTTLTELTAVTICEQVQLAGGCERLLVCGGGARNMLLMARMSALLPGTEVCLTDDFGISGDDMEALAFAWLAFRTLSGQPGNLPSVTGASCETLLGGIYPVLPLGGR</sequence>
<name>ANMK_SERP5</name>
<feature type="chain" id="PRO_1000067357" description="Anhydro-N-acetylmuramic acid kinase">
    <location>
        <begin position="1"/>
        <end position="373"/>
    </location>
</feature>
<feature type="binding site" evidence="1">
    <location>
        <begin position="12"/>
        <end position="19"/>
    </location>
    <ligand>
        <name>ATP</name>
        <dbReference type="ChEBI" id="CHEBI:30616"/>
    </ligand>
</feature>
<organism>
    <name type="scientific">Serratia proteamaculans (strain 568)</name>
    <dbReference type="NCBI Taxonomy" id="399741"/>
    <lineage>
        <taxon>Bacteria</taxon>
        <taxon>Pseudomonadati</taxon>
        <taxon>Pseudomonadota</taxon>
        <taxon>Gammaproteobacteria</taxon>
        <taxon>Enterobacterales</taxon>
        <taxon>Yersiniaceae</taxon>
        <taxon>Serratia</taxon>
    </lineage>
</organism>
<protein>
    <recommendedName>
        <fullName evidence="1">Anhydro-N-acetylmuramic acid kinase</fullName>
        <ecNumber evidence="1">2.7.1.170</ecNumber>
    </recommendedName>
    <alternativeName>
        <fullName evidence="1">AnhMurNAc kinase</fullName>
    </alternativeName>
</protein>
<accession>A8GDX7</accession>